<proteinExistence type="evidence at transcript level"/>
<organism>
    <name type="scientific">Xenopus laevis</name>
    <name type="common">African clawed frog</name>
    <dbReference type="NCBI Taxonomy" id="8355"/>
    <lineage>
        <taxon>Eukaryota</taxon>
        <taxon>Metazoa</taxon>
        <taxon>Chordata</taxon>
        <taxon>Craniata</taxon>
        <taxon>Vertebrata</taxon>
        <taxon>Euteleostomi</taxon>
        <taxon>Amphibia</taxon>
        <taxon>Batrachia</taxon>
        <taxon>Anura</taxon>
        <taxon>Pipoidea</taxon>
        <taxon>Pipidae</taxon>
        <taxon>Xenopodinae</taxon>
        <taxon>Xenopus</taxon>
        <taxon>Xenopus</taxon>
    </lineage>
</organism>
<protein>
    <recommendedName>
        <fullName>Nucleolar complex protein 4 homolog B</fullName>
        <shortName>NOC4 protein homolog B</shortName>
    </recommendedName>
    <alternativeName>
        <fullName>NOC4-like protein B</fullName>
    </alternativeName>
    <alternativeName>
        <fullName>Nucleolar complex-associated protein 4-like protein B</fullName>
    </alternativeName>
</protein>
<feature type="chain" id="PRO_0000173490" description="Nucleolar complex protein 4 homolog B">
    <location>
        <begin position="1"/>
        <end position="525"/>
    </location>
</feature>
<feature type="transmembrane region" description="Helical" evidence="2">
    <location>
        <begin position="307"/>
        <end position="327"/>
    </location>
</feature>
<feature type="transmembrane region" description="Helical" evidence="2">
    <location>
        <begin position="358"/>
        <end position="378"/>
    </location>
</feature>
<feature type="transmembrane region" description="Helical" evidence="2">
    <location>
        <begin position="386"/>
        <end position="406"/>
    </location>
</feature>
<feature type="region of interest" description="Disordered" evidence="3">
    <location>
        <begin position="1"/>
        <end position="21"/>
    </location>
</feature>
<feature type="compositionally biased region" description="Basic residues" evidence="3">
    <location>
        <begin position="1"/>
        <end position="10"/>
    </location>
</feature>
<sequence length="525" mass="60494">MAARKAKHAFRSQATQSDAERQDLDSKLAAVLESRGNANAVFDILEHLESKKEDVVQAAIRTTSKLFEVLLEKRELYIGDLPAEDDSPPDTCSAEDKYKMWMRNRYNSCVSCLLDLLQYSSFSVQELVLCTLMKFIQLEGKFPLENSEWRDSYRFPRELLKFVVDNLLQEEADCTLLITRFQEYLEYDDVRYYTMTVTTECVSRIQQKNKQVLPPVFQTNVFCLLSSINMPVEESTLGNFLVTKNENHEEWKPSKLKEQKRVFERVWMSFLKHQLSVSLYKKVLLILHESILPHMSKPSLMIDFLTAAYDVGGAISLLALNGLFILIHQHNLEYPDFYKKLYSLLEPSVFHVKYRARFFHLANLFLSSTHLPVYLVAAFAKRLARLALTAPPQVLLMIIPFICNLIRRHPACRVLIHRPSAGDLVTDPYIMEEQDPAKSQALESCLWELEVLQQHYHGDVVRAANVISRALSAQESDVSGLLEMSSCELFDKEMKKKFKSVPLEYEPVRGLLGLKSDITAEHFTF</sequence>
<reference key="1">
    <citation type="submission" date="2004-04" db="EMBL/GenBank/DDBJ databases">
        <authorList>
            <consortium name="NIH - Xenopus Gene Collection (XGC) project"/>
        </authorList>
    </citation>
    <scope>NUCLEOTIDE SEQUENCE [LARGE SCALE MRNA]</scope>
    <source>
        <tissue>Ovary</tissue>
    </source>
</reference>
<dbReference type="EMBL" id="BC068706">
    <property type="protein sequence ID" value="AAH68706.1"/>
    <property type="molecule type" value="mRNA"/>
</dbReference>
<dbReference type="SMR" id="Q6NU91"/>
<dbReference type="DNASU" id="414653"/>
<dbReference type="GeneID" id="414653"/>
<dbReference type="KEGG" id="xla:414653"/>
<dbReference type="AGR" id="Xenbase:XB-GENE-6252284"/>
<dbReference type="CTD" id="414653"/>
<dbReference type="Xenbase" id="XB-GENE-6252284">
    <property type="gene designation" value="noc4l.L"/>
</dbReference>
<dbReference type="OMA" id="YYNNIVT"/>
<dbReference type="OrthoDB" id="10263185at2759"/>
<dbReference type="Proteomes" id="UP000186698">
    <property type="component" value="Chromosome 1L"/>
</dbReference>
<dbReference type="Bgee" id="414653">
    <property type="expression patterns" value="Expressed in oocyte and 19 other cell types or tissues"/>
</dbReference>
<dbReference type="GO" id="GO:0030692">
    <property type="term" value="C:Noc4p-Nop14p complex"/>
    <property type="evidence" value="ECO:0000318"/>
    <property type="project" value="GO_Central"/>
</dbReference>
<dbReference type="GO" id="GO:0031965">
    <property type="term" value="C:nuclear membrane"/>
    <property type="evidence" value="ECO:0007669"/>
    <property type="project" value="UniProtKB-SubCell"/>
</dbReference>
<dbReference type="GO" id="GO:0005730">
    <property type="term" value="C:nucleolus"/>
    <property type="evidence" value="ECO:0000318"/>
    <property type="project" value="GO_Central"/>
</dbReference>
<dbReference type="GO" id="GO:0032040">
    <property type="term" value="C:small-subunit processome"/>
    <property type="evidence" value="ECO:0000318"/>
    <property type="project" value="GO_Central"/>
</dbReference>
<dbReference type="GO" id="GO:0042254">
    <property type="term" value="P:ribosome biogenesis"/>
    <property type="evidence" value="ECO:0007669"/>
    <property type="project" value="InterPro"/>
</dbReference>
<dbReference type="InterPro" id="IPR016024">
    <property type="entry name" value="ARM-type_fold"/>
</dbReference>
<dbReference type="InterPro" id="IPR005612">
    <property type="entry name" value="CCAAT-binding_factor"/>
</dbReference>
<dbReference type="InterPro" id="IPR027193">
    <property type="entry name" value="Noc4"/>
</dbReference>
<dbReference type="PANTHER" id="PTHR12455">
    <property type="entry name" value="NUCLEOLAR COMPLEX PROTEIN 4"/>
    <property type="match status" value="1"/>
</dbReference>
<dbReference type="PANTHER" id="PTHR12455:SF0">
    <property type="entry name" value="NUCLEOLAR COMPLEX PROTEIN 4 HOMOLOG"/>
    <property type="match status" value="1"/>
</dbReference>
<dbReference type="Pfam" id="PF03914">
    <property type="entry name" value="CBF"/>
    <property type="match status" value="1"/>
</dbReference>
<dbReference type="SUPFAM" id="SSF48371">
    <property type="entry name" value="ARM repeat"/>
    <property type="match status" value="1"/>
</dbReference>
<evidence type="ECO:0000250" key="1">
    <source>
        <dbReference type="UniProtKB" id="Q9BVI4"/>
    </source>
</evidence>
<evidence type="ECO:0000255" key="2"/>
<evidence type="ECO:0000256" key="3">
    <source>
        <dbReference type="SAM" id="MobiDB-lite"/>
    </source>
</evidence>
<evidence type="ECO:0000305" key="4"/>
<gene>
    <name type="primary">noc4l-b</name>
</gene>
<name>NOC4B_XENLA</name>
<comment type="subcellular location">
    <subcellularLocation>
        <location evidence="1">Nucleus membrane</location>
        <topology evidence="2">Multi-pass membrane protein</topology>
    </subcellularLocation>
    <subcellularLocation>
        <location evidence="1">Nucleus</location>
        <location evidence="1">Nucleolus</location>
    </subcellularLocation>
</comment>
<comment type="similarity">
    <text evidence="4">Belongs to the CBF/MAK21 family.</text>
</comment>
<keyword id="KW-0472">Membrane</keyword>
<keyword id="KW-0539">Nucleus</keyword>
<keyword id="KW-1185">Reference proteome</keyword>
<keyword id="KW-0812">Transmembrane</keyword>
<keyword id="KW-1133">Transmembrane helix</keyword>
<accession>Q6NU91</accession>